<dbReference type="EMBL" id="U52594">
    <property type="protein sequence ID" value="AAB48155.1"/>
    <property type="molecule type" value="mRNA"/>
</dbReference>
<dbReference type="SMR" id="Q96598"/>
<dbReference type="GO" id="GO:0044172">
    <property type="term" value="C:host cell endoplasmic reticulum-Golgi intermediate compartment"/>
    <property type="evidence" value="ECO:0007669"/>
    <property type="project" value="UniProtKB-SubCell"/>
</dbReference>
<dbReference type="GO" id="GO:0044177">
    <property type="term" value="C:host cell Golgi apparatus"/>
    <property type="evidence" value="ECO:0007669"/>
    <property type="project" value="UniProtKB-SubCell"/>
</dbReference>
<dbReference type="GO" id="GO:1990904">
    <property type="term" value="C:ribonucleoprotein complex"/>
    <property type="evidence" value="ECO:0007669"/>
    <property type="project" value="UniProtKB-KW"/>
</dbReference>
<dbReference type="GO" id="GO:0019013">
    <property type="term" value="C:viral nucleocapsid"/>
    <property type="evidence" value="ECO:0007669"/>
    <property type="project" value="UniProtKB-UniRule"/>
</dbReference>
<dbReference type="GO" id="GO:0003723">
    <property type="term" value="F:RNA binding"/>
    <property type="evidence" value="ECO:0007669"/>
    <property type="project" value="UniProtKB-UniRule"/>
</dbReference>
<dbReference type="CDD" id="cd21595">
    <property type="entry name" value="CoV_N-CTD"/>
    <property type="match status" value="1"/>
</dbReference>
<dbReference type="CDD" id="cd21554">
    <property type="entry name" value="CoV_N-NTD"/>
    <property type="match status" value="1"/>
</dbReference>
<dbReference type="HAMAP" id="MF_04097">
    <property type="entry name" value="GAMMA_CORONA_NCAP"/>
    <property type="match status" value="1"/>
</dbReference>
<dbReference type="InterPro" id="IPR044344">
    <property type="entry name" value="N_prot_C_CoV"/>
</dbReference>
<dbReference type="InterPro" id="IPR044345">
    <property type="entry name" value="N_prot_N_CoV"/>
</dbReference>
<dbReference type="InterPro" id="IPR042547">
    <property type="entry name" value="NCAP_gCoV"/>
</dbReference>
<dbReference type="InterPro" id="IPR001218">
    <property type="entry name" value="Nucleocap_CoV"/>
</dbReference>
<dbReference type="InterPro" id="IPR037179">
    <property type="entry name" value="Nucleocapsid_C"/>
</dbReference>
<dbReference type="InterPro" id="IPR037195">
    <property type="entry name" value="Nucleocapsid_N"/>
</dbReference>
<dbReference type="Pfam" id="PF00937">
    <property type="entry name" value="CoV_nucleocap"/>
    <property type="match status" value="1"/>
</dbReference>
<dbReference type="PIRSF" id="PIRSF003888">
    <property type="entry name" value="Corona_nucleocap"/>
    <property type="match status" value="1"/>
</dbReference>
<dbReference type="SUPFAM" id="SSF110304">
    <property type="entry name" value="Coronavirus RNA-binding domain"/>
    <property type="match status" value="1"/>
</dbReference>
<dbReference type="SUPFAM" id="SSF103068">
    <property type="entry name" value="Nucleocapsid protein dimerization domain"/>
    <property type="match status" value="1"/>
</dbReference>
<dbReference type="PROSITE" id="PS51929">
    <property type="entry name" value="COV_N_CTD"/>
    <property type="match status" value="1"/>
</dbReference>
<dbReference type="PROSITE" id="PS51928">
    <property type="entry name" value="COV_N_NTD"/>
    <property type="match status" value="1"/>
</dbReference>
<reference key="1">
    <citation type="journal article" date="1996" name="Virology">
        <title>Novel variation in the N protein of avian infectious bronchitis virus.</title>
        <authorList>
            <person name="Sapats S.I."/>
            <person name="Ashton F."/>
            <person name="Wright P.J."/>
            <person name="Ignjatovic J."/>
        </authorList>
    </citation>
    <scope>NUCLEOTIDE SEQUENCE [MRNA]</scope>
</reference>
<reference key="2">
    <citation type="submission" date="1997-01" db="EMBL/GenBank/DDBJ databases">
        <authorList>
            <person name="Sapats S.I."/>
            <person name="Ashton F."/>
            <person name="Wright P.J."/>
            <person name="Ignjatovic J."/>
        </authorList>
    </citation>
    <scope>SEQUENCE REVISION</scope>
</reference>
<organismHost>
    <name type="scientific">Gallus gallus</name>
    <name type="common">Chicken</name>
    <dbReference type="NCBI Taxonomy" id="9031"/>
</organismHost>
<gene>
    <name evidence="1" type="primary">N</name>
    <name type="ORF">6</name>
</gene>
<keyword id="KW-0013">ADP-ribosylation</keyword>
<keyword id="KW-1015">Disulfide bond</keyword>
<keyword id="KW-1040">Host Golgi apparatus</keyword>
<keyword id="KW-0597">Phosphoprotein</keyword>
<keyword id="KW-0687">Ribonucleoprotein</keyword>
<keyword id="KW-0694">RNA-binding</keyword>
<keyword id="KW-0804">Transcription</keyword>
<keyword id="KW-0805">Transcription regulation</keyword>
<keyword id="KW-0543">Viral nucleoprotein</keyword>
<keyword id="KW-0946">Virion</keyword>
<comment type="function">
    <text evidence="1">Packages the positive strand viral genome RNA into a helical ribonucleocapsid (RNP) and plays a fundamental role during virion assembly through its interactions with the viral genome and membrane protein M. Plays an important role in enhancing the efficiency of subgenomic viral RNA transcription as well as viral replication.</text>
</comment>
<comment type="subunit">
    <text evidence="1">Homooligomer. Both monomeric and oligomeric forms interact with RNA. Interacts with protein M. Interacts with NSP3; this interaction serves to tether the genome to the newly translated replicase-transcriptase complex at a very early stage of infection.</text>
</comment>
<comment type="subcellular location">
    <subcellularLocation>
        <location evidence="1">Virion</location>
    </subcellularLocation>
    <subcellularLocation>
        <location evidence="1">Host endoplasmic reticulum-Golgi intermediate compartment</location>
    </subcellularLocation>
    <subcellularLocation>
        <location evidence="1">Host Golgi apparatus</location>
    </subcellularLocation>
    <text evidence="1">Located inside the virion, complexed with the viral RNA. Probably associates with ER-derived membranes where it participates in viral RNA synthesis and virus budding.</text>
</comment>
<comment type="PTM">
    <text evidence="1">ADP-ribosylated. The ADP-ribosylation is retained in the virion during infection.</text>
</comment>
<comment type="PTM">
    <text evidence="1">Phosphorylated on serine and threonine residues.</text>
</comment>
<comment type="similarity">
    <text evidence="1">Belongs to the gammacoronavirus nucleocapsid protein family.</text>
</comment>
<sequence length="409" mass="45149">MASGKAAGKSDAPTPIIKLGGPKPPKIGSSGNASWFQAIKAKKLNVPQPKFEGSGVPDNNNIKPSQQHGYWRRQARYKPGKSGRKPVPDAWYFYYTGTGPAADLNWGENQDGIVWVAAKGADTKSRSNQGTRDPDKFDQYPLRFSDGGPDGNFRWDFIPLNRGRSGRSTAASSAASSRAPSREGSRGRRSGAEDDLIARAAKIIQDQQKRGSRITKAKADEMAHRRYCKRTIPPGYRVDQVFGPRTKGKEGNFGDDKMNEEGIKDGRVTATLNLIPSSHACLFGSRVTPKLQPDGLHLKFEFTTVVPRDDPQFDNYVKICDQCVDGVGTRPKDDEPRPKSRSSSRPATRGNSPAPRQQRPKKEKKPKKQDDEVDKALTSDEERNNAQLEFDDEPKVINWGDSALGENEL</sequence>
<name>NCAP_IBVVI</name>
<protein>
    <recommendedName>
        <fullName evidence="1">Nucleoprotein</fullName>
    </recommendedName>
    <alternativeName>
        <fullName evidence="1">Nucleocapsid protein</fullName>
        <shortName evidence="1">NC</shortName>
        <shortName evidence="1">Protein N</shortName>
    </alternativeName>
</protein>
<proteinExistence type="evidence at transcript level"/>
<accession>Q96598</accession>
<organism>
    <name type="scientific">Avian infectious bronchitis virus (strain Vic S)</name>
    <name type="common">IBV</name>
    <dbReference type="NCBI Taxonomy" id="231428"/>
    <lineage>
        <taxon>Viruses</taxon>
        <taxon>Riboviria</taxon>
        <taxon>Orthornavirae</taxon>
        <taxon>Pisuviricota</taxon>
        <taxon>Pisoniviricetes</taxon>
        <taxon>Nidovirales</taxon>
        <taxon>Cornidovirineae</taxon>
        <taxon>Coronaviridae</taxon>
        <taxon>Orthocoronavirinae</taxon>
        <taxon>Gammacoronavirus</taxon>
        <taxon>Igacovirus</taxon>
        <taxon>Avian coronavirus</taxon>
    </lineage>
</organism>
<feature type="chain" id="PRO_0000105988" description="Nucleoprotein">
    <location>
        <begin position="1"/>
        <end position="409"/>
    </location>
</feature>
<feature type="domain" description="CoV N NTD" evidence="2">
    <location>
        <begin position="31"/>
        <end position="156"/>
    </location>
</feature>
<feature type="domain" description="CoV N CTD" evidence="3">
    <location>
        <begin position="215"/>
        <end position="331"/>
    </location>
</feature>
<feature type="region of interest" description="Disordered" evidence="4">
    <location>
        <begin position="1"/>
        <end position="32"/>
    </location>
</feature>
<feature type="region of interest" description="RNA-binding" evidence="1">
    <location>
        <begin position="29"/>
        <end position="160"/>
    </location>
</feature>
<feature type="region of interest" description="Disordered" evidence="4">
    <location>
        <begin position="47"/>
        <end position="84"/>
    </location>
</feature>
<feature type="region of interest" description="Disordered" evidence="4">
    <location>
        <begin position="121"/>
        <end position="145"/>
    </location>
</feature>
<feature type="region of interest" description="Disordered" evidence="4">
    <location>
        <begin position="164"/>
        <end position="194"/>
    </location>
</feature>
<feature type="region of interest" description="Dimerization" evidence="1">
    <location>
        <begin position="226"/>
        <end position="333"/>
    </location>
</feature>
<feature type="region of interest" description="Disordered" evidence="4">
    <location>
        <begin position="326"/>
        <end position="409"/>
    </location>
</feature>
<feature type="compositionally biased region" description="Polar residues" evidence="4">
    <location>
        <begin position="57"/>
        <end position="68"/>
    </location>
</feature>
<feature type="compositionally biased region" description="Basic residues" evidence="4">
    <location>
        <begin position="70"/>
        <end position="84"/>
    </location>
</feature>
<feature type="compositionally biased region" description="Low complexity" evidence="4">
    <location>
        <begin position="164"/>
        <end position="179"/>
    </location>
</feature>
<feature type="compositionally biased region" description="Basic and acidic residues" evidence="4">
    <location>
        <begin position="180"/>
        <end position="192"/>
    </location>
</feature>
<feature type="compositionally biased region" description="Basic residues" evidence="4">
    <location>
        <begin position="358"/>
        <end position="367"/>
    </location>
</feature>
<feature type="compositionally biased region" description="Basic and acidic residues" evidence="4">
    <location>
        <begin position="368"/>
        <end position="384"/>
    </location>
</feature>
<feature type="modified residue" description="Phosphoserine; by host" evidence="1">
    <location>
        <position position="190"/>
    </location>
</feature>
<feature type="modified residue" description="Phosphothreonine; by host" evidence="1">
    <location>
        <position position="378"/>
    </location>
</feature>
<feature type="modified residue" description="Phosphoserine; by host" evidence="1">
    <location>
        <position position="379"/>
    </location>
</feature>
<feature type="disulfide bond" evidence="1">
    <location>
        <begin position="320"/>
        <end position="323"/>
    </location>
</feature>
<evidence type="ECO:0000255" key="1">
    <source>
        <dbReference type="HAMAP-Rule" id="MF_04097"/>
    </source>
</evidence>
<evidence type="ECO:0000255" key="2">
    <source>
        <dbReference type="PROSITE-ProRule" id="PRU01276"/>
    </source>
</evidence>
<evidence type="ECO:0000255" key="3">
    <source>
        <dbReference type="PROSITE-ProRule" id="PRU01277"/>
    </source>
</evidence>
<evidence type="ECO:0000256" key="4">
    <source>
        <dbReference type="SAM" id="MobiDB-lite"/>
    </source>
</evidence>